<comment type="function">
    <text>Recognizes and binds the 7-methylguanosine-containing mRNA cap during an early step in the initiation of protein synthesis and facilitates ribosome binding by inducing the unwinding of the mRNAs secondary structures.</text>
</comment>
<comment type="subunit">
    <text>eIF4F is a multi-subunit complex, the composition of which varies with external and internal environmental conditions. It is composed of at least eIF4A, eIF4E and eIF4G. eIF4E is also known to interact with other partners.</text>
</comment>
<comment type="similarity">
    <text evidence="2">Belongs to the eukaryotic initiation factor 4E family.</text>
</comment>
<dbReference type="EMBL" id="X99444">
    <property type="protein sequence ID" value="CAA67807.1"/>
    <property type="molecule type" value="Genomic_DNA"/>
</dbReference>
<dbReference type="EMBL" id="CU329670">
    <property type="protein sequence ID" value="CAB11043.1"/>
    <property type="molecule type" value="Genomic_DNA"/>
</dbReference>
<dbReference type="PIR" id="T43287">
    <property type="entry name" value="T43287"/>
</dbReference>
<dbReference type="RefSeq" id="NP_594228.1">
    <property type="nucleotide sequence ID" value="NM_001019651.2"/>
</dbReference>
<dbReference type="SMR" id="P78954"/>
<dbReference type="BioGRID" id="278201">
    <property type="interactions" value="8"/>
</dbReference>
<dbReference type="ELM" id="P78954"/>
<dbReference type="FunCoup" id="P78954">
    <property type="interactions" value="423"/>
</dbReference>
<dbReference type="STRING" id="284812.P78954"/>
<dbReference type="iPTMnet" id="P78954"/>
<dbReference type="PaxDb" id="4896-SPAC16E8.15.1"/>
<dbReference type="EnsemblFungi" id="SPAC16E8.15.1">
    <property type="protein sequence ID" value="SPAC16E8.15.1:pep"/>
    <property type="gene ID" value="SPAC16E8.15"/>
</dbReference>
<dbReference type="GeneID" id="2541706"/>
<dbReference type="KEGG" id="spo:2541706"/>
<dbReference type="PomBase" id="SPAC16E8.15"/>
<dbReference type="VEuPathDB" id="FungiDB:SPAC16E8.15"/>
<dbReference type="eggNOG" id="KOG1670">
    <property type="taxonomic scope" value="Eukaryota"/>
</dbReference>
<dbReference type="HOGENOM" id="CLU_043552_2_2_1"/>
<dbReference type="InParanoid" id="P78954"/>
<dbReference type="OMA" id="EEFWAIV"/>
<dbReference type="PhylomeDB" id="P78954"/>
<dbReference type="Reactome" id="R-SPO-156827">
    <property type="pathway name" value="L13a-mediated translational silencing of Ceruloplasmin expression"/>
</dbReference>
<dbReference type="Reactome" id="R-SPO-159227">
    <property type="pathway name" value="Transport of the SLBP independent Mature mRNA"/>
</dbReference>
<dbReference type="Reactome" id="R-SPO-159231">
    <property type="pathway name" value="Transport of Mature mRNA Derived from an Intronless Transcript"/>
</dbReference>
<dbReference type="Reactome" id="R-SPO-72649">
    <property type="pathway name" value="Translation initiation complex formation"/>
</dbReference>
<dbReference type="Reactome" id="R-SPO-72662">
    <property type="pathway name" value="Activation of the mRNA upon binding of the cap-binding complex and eIFs, and subsequent binding to 43S"/>
</dbReference>
<dbReference type="Reactome" id="R-SPO-72702">
    <property type="pathway name" value="Ribosomal scanning and start codon recognition"/>
</dbReference>
<dbReference type="Reactome" id="R-SPO-72706">
    <property type="pathway name" value="GTP hydrolysis and joining of the 60S ribosomal subunit"/>
</dbReference>
<dbReference type="PRO" id="PR:P78954"/>
<dbReference type="Proteomes" id="UP000002485">
    <property type="component" value="Chromosome I"/>
</dbReference>
<dbReference type="GO" id="GO:0010494">
    <property type="term" value="C:cytoplasmic stress granule"/>
    <property type="evidence" value="ECO:0000314"/>
    <property type="project" value="PomBase"/>
</dbReference>
<dbReference type="GO" id="GO:0005829">
    <property type="term" value="C:cytosol"/>
    <property type="evidence" value="ECO:0007005"/>
    <property type="project" value="PomBase"/>
</dbReference>
<dbReference type="GO" id="GO:0016281">
    <property type="term" value="C:eukaryotic translation initiation factor 4F complex"/>
    <property type="evidence" value="ECO:0000318"/>
    <property type="project" value="GO_Central"/>
</dbReference>
<dbReference type="GO" id="GO:0000340">
    <property type="term" value="F:RNA 7-methylguanosine cap binding"/>
    <property type="evidence" value="ECO:0000318"/>
    <property type="project" value="GO_Central"/>
</dbReference>
<dbReference type="GO" id="GO:0003743">
    <property type="term" value="F:translation initiation factor activity"/>
    <property type="evidence" value="ECO:0000318"/>
    <property type="project" value="GO_Central"/>
</dbReference>
<dbReference type="GO" id="GO:0002183">
    <property type="term" value="P:cytoplasmic translational initiation"/>
    <property type="evidence" value="ECO:0000266"/>
    <property type="project" value="PomBase"/>
</dbReference>
<dbReference type="GO" id="GO:0000184">
    <property type="term" value="P:nuclear-transcribed mRNA catabolic process, nonsense-mediated decay"/>
    <property type="evidence" value="ECO:0000266"/>
    <property type="project" value="PomBase"/>
</dbReference>
<dbReference type="GO" id="GO:0006417">
    <property type="term" value="P:regulation of translation"/>
    <property type="evidence" value="ECO:0007669"/>
    <property type="project" value="UniProtKB-KW"/>
</dbReference>
<dbReference type="GO" id="GO:0006413">
    <property type="term" value="P:translational initiation"/>
    <property type="evidence" value="ECO:0000318"/>
    <property type="project" value="GO_Central"/>
</dbReference>
<dbReference type="FunFam" id="3.30.760.10:FF:000004">
    <property type="entry name" value="Eukaryotic translation initiation factor 4E-1"/>
    <property type="match status" value="1"/>
</dbReference>
<dbReference type="Gene3D" id="3.30.760.10">
    <property type="entry name" value="RNA Cap, Translation Initiation Factor Eif4e"/>
    <property type="match status" value="1"/>
</dbReference>
<dbReference type="InterPro" id="IPR023398">
    <property type="entry name" value="TIF_eIF4e-like"/>
</dbReference>
<dbReference type="InterPro" id="IPR001040">
    <property type="entry name" value="TIF_eIF_4E"/>
</dbReference>
<dbReference type="InterPro" id="IPR019770">
    <property type="entry name" value="TIF_eIF_4E_CS"/>
</dbReference>
<dbReference type="PANTHER" id="PTHR11960">
    <property type="entry name" value="EUKARYOTIC TRANSLATION INITIATION FACTOR 4E RELATED"/>
    <property type="match status" value="1"/>
</dbReference>
<dbReference type="PANTHER" id="PTHR11960:SF68">
    <property type="entry name" value="EUKARYOTIC TRANSLATION INITIATION FACTOR 4E-1"/>
    <property type="match status" value="1"/>
</dbReference>
<dbReference type="Pfam" id="PF01652">
    <property type="entry name" value="IF4E"/>
    <property type="match status" value="1"/>
</dbReference>
<dbReference type="SUPFAM" id="SSF55418">
    <property type="entry name" value="eIF4e-like"/>
    <property type="match status" value="1"/>
</dbReference>
<dbReference type="PROSITE" id="PS00813">
    <property type="entry name" value="IF4E"/>
    <property type="match status" value="1"/>
</dbReference>
<accession>P78954</accession>
<organism>
    <name type="scientific">Schizosaccharomyces pombe (strain 972 / ATCC 24843)</name>
    <name type="common">Fission yeast</name>
    <dbReference type="NCBI Taxonomy" id="284812"/>
    <lineage>
        <taxon>Eukaryota</taxon>
        <taxon>Fungi</taxon>
        <taxon>Dikarya</taxon>
        <taxon>Ascomycota</taxon>
        <taxon>Taphrinomycotina</taxon>
        <taxon>Schizosaccharomycetes</taxon>
        <taxon>Schizosaccharomycetales</taxon>
        <taxon>Schizosaccharomycetaceae</taxon>
        <taxon>Schizosaccharomyces</taxon>
    </lineage>
</organism>
<keyword id="KW-0396">Initiation factor</keyword>
<keyword id="KW-0648">Protein biosynthesis</keyword>
<keyword id="KW-1185">Reference proteome</keyword>
<keyword id="KW-0694">RNA-binding</keyword>
<keyword id="KW-0810">Translation regulation</keyword>
<sequence length="218" mass="24958">MQTEQPPKESQTENTVSEPQEKALRTVFDDKINFNLKHPLARPWTLWFLMPPTPGLEWNELQKNIITFNSVEEFWGIHNNINPASSLPIKSDYSFFREGVRPEWEDVHNKTGGKWAFQNKGRGGNALDEMWLTTVLAAIGETLDPTGQEVMGVVINMRKGFYRLAVWTKSCNNREVLMEIGTRFKQVLNLPRSETIEFSAHEDSSKSGSTRAKTRMSV</sequence>
<proteinExistence type="inferred from homology"/>
<gene>
    <name type="primary">tif451</name>
    <name type="synonym">tif1</name>
    <name type="synonym">tif45</name>
    <name type="ORF">SPAC16E8.15</name>
</gene>
<evidence type="ECO:0000256" key="1">
    <source>
        <dbReference type="SAM" id="MobiDB-lite"/>
    </source>
</evidence>
<evidence type="ECO:0000305" key="2"/>
<name>IF4E1_SCHPO</name>
<feature type="chain" id="PRO_0000193651" description="Eukaryotic translation initiation factor 4E-1">
    <location>
        <begin position="1"/>
        <end position="218"/>
    </location>
</feature>
<feature type="region of interest" description="Disordered" evidence="1">
    <location>
        <begin position="1"/>
        <end position="20"/>
    </location>
</feature>
<feature type="region of interest" description="Disordered" evidence="1">
    <location>
        <begin position="198"/>
        <end position="218"/>
    </location>
</feature>
<feature type="compositionally biased region" description="Basic and acidic residues" evidence="1">
    <location>
        <begin position="1"/>
        <end position="11"/>
    </location>
</feature>
<feature type="compositionally biased region" description="Polar residues" evidence="1">
    <location>
        <begin position="206"/>
        <end position="218"/>
    </location>
</feature>
<protein>
    <recommendedName>
        <fullName>Eukaryotic translation initiation factor 4E-1</fullName>
        <shortName>eIF-4E-1</shortName>
        <shortName>eIF4E-1</shortName>
    </recommendedName>
    <alternativeName>
        <fullName>eIF-4F 25 kDa subunit 1</fullName>
    </alternativeName>
    <alternativeName>
        <fullName>mRNA cap-binding protein 1</fullName>
    </alternativeName>
</protein>
<reference key="1">
    <citation type="journal article" date="1996" name="J. Biol. Chem.">
        <title>Schizosaccharomyces pombe has a novel eukaryotic initiation factor 4F complex containing a cap-binding protein with the human eIF4E C-terminal motif KSGST.</title>
        <authorList>
            <person name="Ptushkina M."/>
            <person name="Fierro-Monti I."/>
            <person name="van den Heuvel J.J."/>
            <person name="Vasilescu S."/>
            <person name="Birkenhaeger R."/>
            <person name="Mita K."/>
            <person name="McCarthy J.E.G."/>
        </authorList>
    </citation>
    <scope>NUCLEOTIDE SEQUENCE [GENOMIC DNA]</scope>
    <source>
        <strain>DSM 70576</strain>
    </source>
</reference>
<reference key="2">
    <citation type="journal article" date="2002" name="Nature">
        <title>The genome sequence of Schizosaccharomyces pombe.</title>
        <authorList>
            <person name="Wood V."/>
            <person name="Gwilliam R."/>
            <person name="Rajandream M.A."/>
            <person name="Lyne M.H."/>
            <person name="Lyne R."/>
            <person name="Stewart A."/>
            <person name="Sgouros J.G."/>
            <person name="Peat N."/>
            <person name="Hayles J."/>
            <person name="Baker S.G."/>
            <person name="Basham D."/>
            <person name="Bowman S."/>
            <person name="Brooks K."/>
            <person name="Brown D."/>
            <person name="Brown S."/>
            <person name="Chillingworth T."/>
            <person name="Churcher C.M."/>
            <person name="Collins M."/>
            <person name="Connor R."/>
            <person name="Cronin A."/>
            <person name="Davis P."/>
            <person name="Feltwell T."/>
            <person name="Fraser A."/>
            <person name="Gentles S."/>
            <person name="Goble A."/>
            <person name="Hamlin N."/>
            <person name="Harris D.E."/>
            <person name="Hidalgo J."/>
            <person name="Hodgson G."/>
            <person name="Holroyd S."/>
            <person name="Hornsby T."/>
            <person name="Howarth S."/>
            <person name="Huckle E.J."/>
            <person name="Hunt S."/>
            <person name="Jagels K."/>
            <person name="James K.D."/>
            <person name="Jones L."/>
            <person name="Jones M."/>
            <person name="Leather S."/>
            <person name="McDonald S."/>
            <person name="McLean J."/>
            <person name="Mooney P."/>
            <person name="Moule S."/>
            <person name="Mungall K.L."/>
            <person name="Murphy L.D."/>
            <person name="Niblett D."/>
            <person name="Odell C."/>
            <person name="Oliver K."/>
            <person name="O'Neil S."/>
            <person name="Pearson D."/>
            <person name="Quail M.A."/>
            <person name="Rabbinowitsch E."/>
            <person name="Rutherford K.M."/>
            <person name="Rutter S."/>
            <person name="Saunders D."/>
            <person name="Seeger K."/>
            <person name="Sharp S."/>
            <person name="Skelton J."/>
            <person name="Simmonds M.N."/>
            <person name="Squares R."/>
            <person name="Squares S."/>
            <person name="Stevens K."/>
            <person name="Taylor K."/>
            <person name="Taylor R.G."/>
            <person name="Tivey A."/>
            <person name="Walsh S.V."/>
            <person name="Warren T."/>
            <person name="Whitehead S."/>
            <person name="Woodward J.R."/>
            <person name="Volckaert G."/>
            <person name="Aert R."/>
            <person name="Robben J."/>
            <person name="Grymonprez B."/>
            <person name="Weltjens I."/>
            <person name="Vanstreels E."/>
            <person name="Rieger M."/>
            <person name="Schaefer M."/>
            <person name="Mueller-Auer S."/>
            <person name="Gabel C."/>
            <person name="Fuchs M."/>
            <person name="Duesterhoeft A."/>
            <person name="Fritzc C."/>
            <person name="Holzer E."/>
            <person name="Moestl D."/>
            <person name="Hilbert H."/>
            <person name="Borzym K."/>
            <person name="Langer I."/>
            <person name="Beck A."/>
            <person name="Lehrach H."/>
            <person name="Reinhardt R."/>
            <person name="Pohl T.M."/>
            <person name="Eger P."/>
            <person name="Zimmermann W."/>
            <person name="Wedler H."/>
            <person name="Wambutt R."/>
            <person name="Purnelle B."/>
            <person name="Goffeau A."/>
            <person name="Cadieu E."/>
            <person name="Dreano S."/>
            <person name="Gloux S."/>
            <person name="Lelaure V."/>
            <person name="Mottier S."/>
            <person name="Galibert F."/>
            <person name="Aves S.J."/>
            <person name="Xiang Z."/>
            <person name="Hunt C."/>
            <person name="Moore K."/>
            <person name="Hurst S.M."/>
            <person name="Lucas M."/>
            <person name="Rochet M."/>
            <person name="Gaillardin C."/>
            <person name="Tallada V.A."/>
            <person name="Garzon A."/>
            <person name="Thode G."/>
            <person name="Daga R.R."/>
            <person name="Cruzado L."/>
            <person name="Jimenez J."/>
            <person name="Sanchez M."/>
            <person name="del Rey F."/>
            <person name="Benito J."/>
            <person name="Dominguez A."/>
            <person name="Revuelta J.L."/>
            <person name="Moreno S."/>
            <person name="Armstrong J."/>
            <person name="Forsburg S.L."/>
            <person name="Cerutti L."/>
            <person name="Lowe T."/>
            <person name="McCombie W.R."/>
            <person name="Paulsen I."/>
            <person name="Potashkin J."/>
            <person name="Shpakovski G.V."/>
            <person name="Ussery D."/>
            <person name="Barrell B.G."/>
            <person name="Nurse P."/>
        </authorList>
    </citation>
    <scope>NUCLEOTIDE SEQUENCE [LARGE SCALE GENOMIC DNA]</scope>
    <source>
        <strain>972 / ATCC 24843</strain>
    </source>
</reference>